<organism>
    <name type="scientific">Haemophilus influenzae (strain PittGG)</name>
    <dbReference type="NCBI Taxonomy" id="374931"/>
    <lineage>
        <taxon>Bacteria</taxon>
        <taxon>Pseudomonadati</taxon>
        <taxon>Pseudomonadota</taxon>
        <taxon>Gammaproteobacteria</taxon>
        <taxon>Pasteurellales</taxon>
        <taxon>Pasteurellaceae</taxon>
        <taxon>Haemophilus</taxon>
    </lineage>
</organism>
<accession>A5UG94</accession>
<sequence>MISLKNFGLLFWKRFSENKLNQVAGALTYSTMLAMVPLVMVIFSIFSAFPVFNEVTGELKEMIFTNFAPSASDMVGEYIDQFVSNSKKMSAVGIVSLIAVALMLINNIDRTLNSIWHNSQSRSPLSSFAIYWMILTLGPLIIGVSIGISSYIKIMFEQSEHLSLGLKLLSFVPFLFTWFIFTLIYTVVPNKKVKIKHSAYGAFLAAIFFTLGKQAFTWYIVTFPSYQLIYGAMATLPIMLLWIQISWLVVLVGAQLASTLDEIGEQIEQ</sequence>
<proteinExistence type="inferred from homology"/>
<evidence type="ECO:0000255" key="1">
    <source>
        <dbReference type="HAMAP-Rule" id="MF_00672"/>
    </source>
</evidence>
<protein>
    <recommendedName>
        <fullName evidence="1">UPF0761 membrane protein CGSHiGG_04180</fullName>
    </recommendedName>
</protein>
<dbReference type="EMBL" id="CP000672">
    <property type="protein sequence ID" value="ABQ99799.1"/>
    <property type="molecule type" value="Genomic_DNA"/>
</dbReference>
<dbReference type="KEGG" id="hiq:CGSHiGG_04180"/>
<dbReference type="HOGENOM" id="CLU_032288_0_0_6"/>
<dbReference type="Proteomes" id="UP000001990">
    <property type="component" value="Chromosome"/>
</dbReference>
<dbReference type="GO" id="GO:0005886">
    <property type="term" value="C:plasma membrane"/>
    <property type="evidence" value="ECO:0007669"/>
    <property type="project" value="UniProtKB-SubCell"/>
</dbReference>
<dbReference type="HAMAP" id="MF_00672">
    <property type="entry name" value="UPF0761"/>
    <property type="match status" value="1"/>
</dbReference>
<dbReference type="InterPro" id="IPR023679">
    <property type="entry name" value="UPF0761_bac"/>
</dbReference>
<dbReference type="InterPro" id="IPR017039">
    <property type="entry name" value="Virul_fac_BrkB"/>
</dbReference>
<dbReference type="NCBIfam" id="NF002457">
    <property type="entry name" value="PRK01637.1"/>
    <property type="match status" value="1"/>
</dbReference>
<dbReference type="NCBIfam" id="TIGR00765">
    <property type="entry name" value="yihY_not_rbn"/>
    <property type="match status" value="1"/>
</dbReference>
<dbReference type="PANTHER" id="PTHR30213">
    <property type="entry name" value="INNER MEMBRANE PROTEIN YHJD"/>
    <property type="match status" value="1"/>
</dbReference>
<dbReference type="PANTHER" id="PTHR30213:SF0">
    <property type="entry name" value="UPF0761 MEMBRANE PROTEIN YIHY"/>
    <property type="match status" value="1"/>
</dbReference>
<dbReference type="Pfam" id="PF03631">
    <property type="entry name" value="Virul_fac_BrkB"/>
    <property type="match status" value="1"/>
</dbReference>
<dbReference type="PIRSF" id="PIRSF035875">
    <property type="entry name" value="RNase_BN"/>
    <property type="match status" value="1"/>
</dbReference>
<keyword id="KW-0997">Cell inner membrane</keyword>
<keyword id="KW-1003">Cell membrane</keyword>
<keyword id="KW-0472">Membrane</keyword>
<keyword id="KW-0812">Transmembrane</keyword>
<keyword id="KW-1133">Transmembrane helix</keyword>
<gene>
    <name type="ordered locus">CGSHiGG_04180</name>
</gene>
<name>Y4180_HAEIG</name>
<reference key="1">
    <citation type="journal article" date="2007" name="Genome Biol.">
        <title>Characterization and modeling of the Haemophilus influenzae core and supragenomes based on the complete genomic sequences of Rd and 12 clinical nontypeable strains.</title>
        <authorList>
            <person name="Hogg J.S."/>
            <person name="Hu F.Z."/>
            <person name="Janto B."/>
            <person name="Boissy R."/>
            <person name="Hayes J."/>
            <person name="Keefe R."/>
            <person name="Post J.C."/>
            <person name="Ehrlich G.D."/>
        </authorList>
    </citation>
    <scope>NUCLEOTIDE SEQUENCE [LARGE SCALE GENOMIC DNA]</scope>
    <source>
        <strain>PittGG</strain>
    </source>
</reference>
<feature type="chain" id="PRO_1000044718" description="UPF0761 membrane protein CGSHiGG_04180">
    <location>
        <begin position="1"/>
        <end position="269"/>
    </location>
</feature>
<feature type="transmembrane region" description="Helical" evidence="1">
    <location>
        <begin position="32"/>
        <end position="52"/>
    </location>
</feature>
<feature type="transmembrane region" description="Helical" evidence="1">
    <location>
        <begin position="89"/>
        <end position="109"/>
    </location>
</feature>
<feature type="transmembrane region" description="Helical" evidence="1">
    <location>
        <begin position="128"/>
        <end position="148"/>
    </location>
</feature>
<feature type="transmembrane region" description="Helical" evidence="1">
    <location>
        <begin position="168"/>
        <end position="188"/>
    </location>
</feature>
<feature type="transmembrane region" description="Helical" evidence="1">
    <location>
        <begin position="203"/>
        <end position="223"/>
    </location>
</feature>
<feature type="transmembrane region" description="Helical" evidence="1">
    <location>
        <begin position="232"/>
        <end position="252"/>
    </location>
</feature>
<comment type="subcellular location">
    <subcellularLocation>
        <location evidence="1">Cell inner membrane</location>
        <topology evidence="1">Multi-pass membrane protein</topology>
    </subcellularLocation>
</comment>
<comment type="similarity">
    <text evidence="1">Belongs to the UPF0761 family.</text>
</comment>